<comment type="function">
    <text evidence="3">Is potently cytotoxic (EC(50) value 79 ng/mL) towards L1210 mouse leukemia cells, has hemagglutination activity on sheep erythrocytes, and is lethal in crayfish. Has no phospholipase A2 activity.</text>
</comment>
<comment type="subcellular location">
    <subcellularLocation>
        <location evidence="3">Secreted</location>
    </subcellularLocation>
    <subcellularLocation>
        <location evidence="3">Nematocyst</location>
    </subcellularLocation>
</comment>
<comment type="PTM">
    <text>Is not glycosylated.</text>
</comment>
<comment type="toxic dose">
    <text evidence="3">LD(50) is 106 mu/kg in crayfish.</text>
</comment>
<comment type="similarity">
    <text evidence="4">Belongs to the dermatopontin family.</text>
</comment>
<protein>
    <recommendedName>
        <fullName>Millepora cytotoxin-1</fullName>
        <shortName>MCTx-1</shortName>
    </recommendedName>
</protein>
<reference key="1">
    <citation type="journal article" date="2008" name="Biochem. Biophys. Res. Commun.">
        <title>Isolation and characterization of a novel protein toxin from fire coral.</title>
        <authorList>
            <person name="Iguchi A."/>
            <person name="Iwanaga S."/>
            <person name="Nagai H."/>
        </authorList>
    </citation>
    <scope>NUCLEOTIDE SEQUENCE [MRNA]</scope>
    <scope>PROTEIN SEQUENCE OF 76-85; 97-104; 164-173; 177-184 AND 200-215</scope>
    <scope>FUNCTION</scope>
    <scope>SUBCELLULAR LOCATION</scope>
    <scope>TOXIC DOSE</scope>
    <source>
        <tissue>Nematoblast</tissue>
    </source>
</reference>
<name>MCTX1_MILDI</name>
<evidence type="ECO:0000250" key="1"/>
<evidence type="ECO:0000255" key="2"/>
<evidence type="ECO:0000269" key="3">
    <source>
    </source>
</evidence>
<evidence type="ECO:0000305" key="4"/>
<feature type="signal peptide" evidence="2">
    <location>
        <begin position="1"/>
        <end position="20"/>
    </location>
</feature>
<feature type="propeptide" id="PRO_0000359432" evidence="3">
    <location>
        <begin position="21"/>
        <end position="75"/>
    </location>
</feature>
<feature type="chain" id="PRO_0000359433" description="Millepora cytotoxin-1">
    <location>
        <begin position="76"/>
        <end position="222"/>
    </location>
</feature>
<feature type="repeat">
    <location>
        <begin position="100"/>
        <end position="109"/>
    </location>
</feature>
<feature type="repeat">
    <location>
        <begin position="153"/>
        <end position="162"/>
    </location>
</feature>
<feature type="repeat">
    <location>
        <begin position="206"/>
        <end position="215"/>
    </location>
</feature>
<feature type="disulfide bond" evidence="1">
    <location>
        <begin position="89"/>
        <end position="115"/>
    </location>
</feature>
<feature type="disulfide bond" evidence="1">
    <location>
        <begin position="142"/>
        <end position="168"/>
    </location>
</feature>
<feature type="disulfide bond" evidence="1">
    <location>
        <begin position="179"/>
        <end position="222"/>
    </location>
</feature>
<dbReference type="EMBL" id="AB299385">
    <property type="protein sequence ID" value="BAF91371.1"/>
    <property type="molecule type" value="mRNA"/>
</dbReference>
<dbReference type="GO" id="GO:0031012">
    <property type="term" value="C:extracellular matrix"/>
    <property type="evidence" value="ECO:0007669"/>
    <property type="project" value="TreeGrafter"/>
</dbReference>
<dbReference type="GO" id="GO:0005615">
    <property type="term" value="C:extracellular space"/>
    <property type="evidence" value="ECO:0007669"/>
    <property type="project" value="TreeGrafter"/>
</dbReference>
<dbReference type="GO" id="GO:0042151">
    <property type="term" value="C:nematocyst"/>
    <property type="evidence" value="ECO:0007669"/>
    <property type="project" value="UniProtKB-SubCell"/>
</dbReference>
<dbReference type="GO" id="GO:0030199">
    <property type="term" value="P:collagen fibril organization"/>
    <property type="evidence" value="ECO:0007669"/>
    <property type="project" value="TreeGrafter"/>
</dbReference>
<dbReference type="InterPro" id="IPR026645">
    <property type="entry name" value="Dermatopontin"/>
</dbReference>
<dbReference type="PANTHER" id="PTHR15040:SF1">
    <property type="entry name" value="DERMATOPONTIN-LIKE ISOFORM X1"/>
    <property type="match status" value="1"/>
</dbReference>
<dbReference type="PANTHER" id="PTHR15040">
    <property type="entry name" value="DERMATOPONTIN-RELATED"/>
    <property type="match status" value="1"/>
</dbReference>
<dbReference type="Pfam" id="PF14704">
    <property type="entry name" value="DERM"/>
    <property type="match status" value="1"/>
</dbReference>
<sequence>MVTLYLHVPILLLVVITARAAPKPDTHNPFDELSSVAEKQDLHYGDRSRKDPFIAQNDVGNNFRDGTQENLTKVRSKVNQYDQPFTFKCPLGETIKSIGSIHDNHYEDRQWDIDCKPAGYTMGISTWSPYANDYDGSMNFECNEGSVVTGMSSIHDNYYEDRRYQLMCSYLNNWKRGSCAWTSYTTYDASFVELTPTGKFLVGMKSQHNNYYEDRKFKMLYC</sequence>
<accession>A8QZJ5</accession>
<proteinExistence type="evidence at protein level"/>
<organism>
    <name type="scientific">Millepora dichotoma</name>
    <name type="common">Net fire coral</name>
    <dbReference type="NCBI Taxonomy" id="544484"/>
    <lineage>
        <taxon>Eukaryota</taxon>
        <taxon>Metazoa</taxon>
        <taxon>Cnidaria</taxon>
        <taxon>Hydrozoa</taxon>
        <taxon>Hydroidolina</taxon>
        <taxon>Anthoathecata</taxon>
        <taxon>Capitata</taxon>
        <taxon>Milleporidae</taxon>
        <taxon>Millepora</taxon>
    </lineage>
</organism>
<keyword id="KW-0903">Direct protein sequencing</keyword>
<keyword id="KW-1015">Disulfide bond</keyword>
<keyword id="KW-0166">Nematocyst</keyword>
<keyword id="KW-0677">Repeat</keyword>
<keyword id="KW-0964">Secreted</keyword>
<keyword id="KW-0732">Signal</keyword>